<feature type="signal peptide" evidence="2">
    <location>
        <begin position="1"/>
        <end position="17"/>
    </location>
</feature>
<feature type="chain" id="PRO_0000398803" description="Vitelline membrane protein Vm32E" evidence="2">
    <location>
        <begin position="18"/>
        <end position="115"/>
    </location>
</feature>
<feature type="domain" description="VM" evidence="3">
    <location>
        <begin position="35"/>
        <end position="72"/>
    </location>
</feature>
<keyword id="KW-0964">Secreted</keyword>
<keyword id="KW-0732">Signal</keyword>
<gene>
    <name evidence="5" type="primary">Vm32E</name>
    <name type="ORF">GE12948</name>
</gene>
<dbReference type="EMBL" id="EF441685">
    <property type="protein sequence ID" value="ABO71726.1"/>
    <property type="molecule type" value="Genomic_DNA"/>
</dbReference>
<dbReference type="EMBL" id="CM000157">
    <property type="protein sequence ID" value="EDW88059.1"/>
    <property type="molecule type" value="Genomic_DNA"/>
</dbReference>
<dbReference type="EnsemblMetazoa" id="FBtr0259466">
    <property type="protein sequence ID" value="FBpp0257958"/>
    <property type="gene ID" value="FBgn0230662"/>
</dbReference>
<dbReference type="EnsemblMetazoa" id="XM_002088311.4">
    <property type="protein sequence ID" value="XP_002088347.1"/>
    <property type="gene ID" value="LOC6527253"/>
</dbReference>
<dbReference type="GeneID" id="6527253"/>
<dbReference type="KEGG" id="dya:Dyak_GE12948"/>
<dbReference type="CTD" id="34558"/>
<dbReference type="HOGENOM" id="CLU_169196_0_0_1"/>
<dbReference type="OMA" id="CAQEAQA"/>
<dbReference type="OrthoDB" id="8062718at2759"/>
<dbReference type="PhylomeDB" id="B4P184"/>
<dbReference type="Proteomes" id="UP000002282">
    <property type="component" value="Chromosome 2L"/>
</dbReference>
<dbReference type="GO" id="GO:0042600">
    <property type="term" value="C:egg chorion"/>
    <property type="evidence" value="ECO:0007669"/>
    <property type="project" value="EnsemblMetazoa"/>
</dbReference>
<dbReference type="GO" id="GO:0005615">
    <property type="term" value="C:extracellular space"/>
    <property type="evidence" value="ECO:0000250"/>
    <property type="project" value="UniProtKB"/>
</dbReference>
<dbReference type="GO" id="GO:0060388">
    <property type="term" value="C:vitelline envelope"/>
    <property type="evidence" value="ECO:0007669"/>
    <property type="project" value="EnsemblMetazoa"/>
</dbReference>
<dbReference type="GO" id="GO:0008316">
    <property type="term" value="F:structural constituent of vitelline membrane"/>
    <property type="evidence" value="ECO:0000250"/>
    <property type="project" value="UniProtKB"/>
</dbReference>
<dbReference type="GO" id="GO:0007305">
    <property type="term" value="P:vitelline membrane formation involved in chorion-containing eggshell formation"/>
    <property type="evidence" value="ECO:0000250"/>
    <property type="project" value="UniProtKB"/>
</dbReference>
<dbReference type="InterPro" id="IPR013135">
    <property type="entry name" value="Vitelline_membr_Cys-rich-dom"/>
</dbReference>
<dbReference type="Pfam" id="PF10542">
    <property type="entry name" value="Vitelline_membr"/>
    <property type="match status" value="1"/>
</dbReference>
<dbReference type="PROSITE" id="PS51137">
    <property type="entry name" value="VM"/>
    <property type="match status" value="1"/>
</dbReference>
<protein>
    <recommendedName>
        <fullName evidence="5">Vitelline membrane protein Vm32E</fullName>
    </recommendedName>
</protein>
<evidence type="ECO:0000250" key="1">
    <source>
        <dbReference type="UniProtKB" id="Q9VKI3"/>
    </source>
</evidence>
<evidence type="ECO:0000255" key="2"/>
<evidence type="ECO:0000255" key="3">
    <source>
        <dbReference type="PROSITE-ProRule" id="PRU00483"/>
    </source>
</evidence>
<evidence type="ECO:0000305" key="4"/>
<evidence type="ECO:0000312" key="5">
    <source>
        <dbReference type="EMBL" id="ABO71726.1"/>
    </source>
</evidence>
<evidence type="ECO:0000312" key="6">
    <source>
        <dbReference type="EMBL" id="EDW88059.1"/>
    </source>
</evidence>
<comment type="function">
    <text evidence="1">Major early eggshell protein.</text>
</comment>
<comment type="subcellular location">
    <subcellularLocation>
        <location evidence="1">Secreted</location>
    </subcellularLocation>
</comment>
<comment type="similarity">
    <text evidence="4">Belongs to the vitelline membrane family.</text>
</comment>
<reference evidence="5" key="1">
    <citation type="journal article" date="2007" name="Mol. Biol. Evol.">
        <title>Rapid evolution of outer egg membrane proteins in the Drosophila melanogaster subgroup: a case of ecologically driven evolution of female reproductive traits.</title>
        <authorList>
            <person name="Jagadeeshan S."/>
            <person name="Singh R.S."/>
        </authorList>
    </citation>
    <scope>NUCLEOTIDE SEQUENCE [GENOMIC DNA]</scope>
</reference>
<reference evidence="6" key="2">
    <citation type="journal article" date="2007" name="Nature">
        <title>Evolution of genes and genomes on the Drosophila phylogeny.</title>
        <authorList>
            <consortium name="Drosophila 12 genomes consortium"/>
        </authorList>
    </citation>
    <scope>NUCLEOTIDE SEQUENCE [LARGE SCALE GENOMIC DNA]</scope>
    <source>
        <strain evidence="6">Tai18E2 / Tucson 14021-0261.01</strain>
    </source>
</reference>
<proteinExistence type="inferred from homology"/>
<accession>B4P184</accession>
<accession>A4UM17</accession>
<sequence length="115" mass="11942">MKIVAFTLVAFVALAGASCPYAAPAAAPAPAAPSGYPAPPCPTNYLFSCQPNLAPAPCAQEAPAYGSAGAYTEQVPQYVGNPSREQVQQFHQRIGMAALMEELRGLGQGIQGQQY</sequence>
<organism>
    <name type="scientific">Drosophila yakuba</name>
    <name type="common">Fruit fly</name>
    <dbReference type="NCBI Taxonomy" id="7245"/>
    <lineage>
        <taxon>Eukaryota</taxon>
        <taxon>Metazoa</taxon>
        <taxon>Ecdysozoa</taxon>
        <taxon>Arthropoda</taxon>
        <taxon>Hexapoda</taxon>
        <taxon>Insecta</taxon>
        <taxon>Pterygota</taxon>
        <taxon>Neoptera</taxon>
        <taxon>Endopterygota</taxon>
        <taxon>Diptera</taxon>
        <taxon>Brachycera</taxon>
        <taxon>Muscomorpha</taxon>
        <taxon>Ephydroidea</taxon>
        <taxon>Drosophilidae</taxon>
        <taxon>Drosophila</taxon>
        <taxon>Sophophora</taxon>
    </lineage>
</organism>
<name>VTU4_DROYA</name>